<feature type="chain" id="PRO_0000413109" description="Inosine triphosphate pyrophosphatase">
    <location>
        <begin position="1"/>
        <end position="191"/>
    </location>
</feature>
<feature type="binding site" evidence="1">
    <location>
        <begin position="9"/>
        <end position="14"/>
    </location>
    <ligand>
        <name>ITP</name>
        <dbReference type="ChEBI" id="CHEBI:61402"/>
    </ligand>
</feature>
<feature type="binding site" evidence="1">
    <location>
        <position position="39"/>
    </location>
    <ligand>
        <name>Mg(2+)</name>
        <dbReference type="ChEBI" id="CHEBI:18420"/>
    </ligand>
</feature>
<feature type="binding site" evidence="1">
    <location>
        <position position="51"/>
    </location>
    <ligand>
        <name>ITP</name>
        <dbReference type="ChEBI" id="CHEBI:61402"/>
    </ligand>
</feature>
<feature type="binding site" evidence="1">
    <location>
        <begin position="67"/>
        <end position="68"/>
    </location>
    <ligand>
        <name>ITP</name>
        <dbReference type="ChEBI" id="CHEBI:61402"/>
    </ligand>
</feature>
<feature type="binding site" evidence="1">
    <location>
        <position position="84"/>
    </location>
    <ligand>
        <name>ITP</name>
        <dbReference type="ChEBI" id="CHEBI:61402"/>
    </ligand>
</feature>
<feature type="binding site" evidence="1">
    <location>
        <begin position="143"/>
        <end position="146"/>
    </location>
    <ligand>
        <name>ITP</name>
        <dbReference type="ChEBI" id="CHEBI:61402"/>
    </ligand>
</feature>
<feature type="binding site" evidence="1">
    <location>
        <position position="166"/>
    </location>
    <ligand>
        <name>ITP</name>
        <dbReference type="ChEBI" id="CHEBI:61402"/>
    </ligand>
</feature>
<feature type="binding site" evidence="1">
    <location>
        <begin position="171"/>
        <end position="172"/>
    </location>
    <ligand>
        <name>ITP</name>
        <dbReference type="ChEBI" id="CHEBI:61402"/>
    </ligand>
</feature>
<gene>
    <name type="ORF">CG8891</name>
</gene>
<sequence length="191" mass="21449">MSKPITFVTGNAKKLEELVAILGPSFPRTIVSKKIDLPELQGDIDEIAIKKCKEAARQVNGPVLVEDTSLCFNALEGLPGPYIKWFLEKLQPEGLHRLLHGWENKSAQAICTFGYCDGVDAEPLIFKGITEGVIVEPRGPRDFGWDPVFQPSGYDKTYAELPKSEKNTISHRYRALALLRQHFEKQDKLIN</sequence>
<reference key="1">
    <citation type="journal article" date="2000" name="Science">
        <title>The genome sequence of Drosophila melanogaster.</title>
        <authorList>
            <person name="Adams M.D."/>
            <person name="Celniker S.E."/>
            <person name="Holt R.A."/>
            <person name="Evans C.A."/>
            <person name="Gocayne J.D."/>
            <person name="Amanatides P.G."/>
            <person name="Scherer S.E."/>
            <person name="Li P.W."/>
            <person name="Hoskins R.A."/>
            <person name="Galle R.F."/>
            <person name="George R.A."/>
            <person name="Lewis S.E."/>
            <person name="Richards S."/>
            <person name="Ashburner M."/>
            <person name="Henderson S.N."/>
            <person name="Sutton G.G."/>
            <person name="Wortman J.R."/>
            <person name="Yandell M.D."/>
            <person name="Zhang Q."/>
            <person name="Chen L.X."/>
            <person name="Brandon R.C."/>
            <person name="Rogers Y.-H.C."/>
            <person name="Blazej R.G."/>
            <person name="Champe M."/>
            <person name="Pfeiffer B.D."/>
            <person name="Wan K.H."/>
            <person name="Doyle C."/>
            <person name="Baxter E.G."/>
            <person name="Helt G."/>
            <person name="Nelson C.R."/>
            <person name="Miklos G.L.G."/>
            <person name="Abril J.F."/>
            <person name="Agbayani A."/>
            <person name="An H.-J."/>
            <person name="Andrews-Pfannkoch C."/>
            <person name="Baldwin D."/>
            <person name="Ballew R.M."/>
            <person name="Basu A."/>
            <person name="Baxendale J."/>
            <person name="Bayraktaroglu L."/>
            <person name="Beasley E.M."/>
            <person name="Beeson K.Y."/>
            <person name="Benos P.V."/>
            <person name="Berman B.P."/>
            <person name="Bhandari D."/>
            <person name="Bolshakov S."/>
            <person name="Borkova D."/>
            <person name="Botchan M.R."/>
            <person name="Bouck J."/>
            <person name="Brokstein P."/>
            <person name="Brottier P."/>
            <person name="Burtis K.C."/>
            <person name="Busam D.A."/>
            <person name="Butler H."/>
            <person name="Cadieu E."/>
            <person name="Center A."/>
            <person name="Chandra I."/>
            <person name="Cherry J.M."/>
            <person name="Cawley S."/>
            <person name="Dahlke C."/>
            <person name="Davenport L.B."/>
            <person name="Davies P."/>
            <person name="de Pablos B."/>
            <person name="Delcher A."/>
            <person name="Deng Z."/>
            <person name="Mays A.D."/>
            <person name="Dew I."/>
            <person name="Dietz S.M."/>
            <person name="Dodson K."/>
            <person name="Doup L.E."/>
            <person name="Downes M."/>
            <person name="Dugan-Rocha S."/>
            <person name="Dunkov B.C."/>
            <person name="Dunn P."/>
            <person name="Durbin K.J."/>
            <person name="Evangelista C.C."/>
            <person name="Ferraz C."/>
            <person name="Ferriera S."/>
            <person name="Fleischmann W."/>
            <person name="Fosler C."/>
            <person name="Gabrielian A.E."/>
            <person name="Garg N.S."/>
            <person name="Gelbart W.M."/>
            <person name="Glasser K."/>
            <person name="Glodek A."/>
            <person name="Gong F."/>
            <person name="Gorrell J.H."/>
            <person name="Gu Z."/>
            <person name="Guan P."/>
            <person name="Harris M."/>
            <person name="Harris N.L."/>
            <person name="Harvey D.A."/>
            <person name="Heiman T.J."/>
            <person name="Hernandez J.R."/>
            <person name="Houck J."/>
            <person name="Hostin D."/>
            <person name="Houston K.A."/>
            <person name="Howland T.J."/>
            <person name="Wei M.-H."/>
            <person name="Ibegwam C."/>
            <person name="Jalali M."/>
            <person name="Kalush F."/>
            <person name="Karpen G.H."/>
            <person name="Ke Z."/>
            <person name="Kennison J.A."/>
            <person name="Ketchum K.A."/>
            <person name="Kimmel B.E."/>
            <person name="Kodira C.D."/>
            <person name="Kraft C.L."/>
            <person name="Kravitz S."/>
            <person name="Kulp D."/>
            <person name="Lai Z."/>
            <person name="Lasko P."/>
            <person name="Lei Y."/>
            <person name="Levitsky A.A."/>
            <person name="Li J.H."/>
            <person name="Li Z."/>
            <person name="Liang Y."/>
            <person name="Lin X."/>
            <person name="Liu X."/>
            <person name="Mattei B."/>
            <person name="McIntosh T.C."/>
            <person name="McLeod M.P."/>
            <person name="McPherson D."/>
            <person name="Merkulov G."/>
            <person name="Milshina N.V."/>
            <person name="Mobarry C."/>
            <person name="Morris J."/>
            <person name="Moshrefi A."/>
            <person name="Mount S.M."/>
            <person name="Moy M."/>
            <person name="Murphy B."/>
            <person name="Murphy L."/>
            <person name="Muzny D.M."/>
            <person name="Nelson D.L."/>
            <person name="Nelson D.R."/>
            <person name="Nelson K.A."/>
            <person name="Nixon K."/>
            <person name="Nusskern D.R."/>
            <person name="Pacleb J.M."/>
            <person name="Palazzolo M."/>
            <person name="Pittman G.S."/>
            <person name="Pan S."/>
            <person name="Pollard J."/>
            <person name="Puri V."/>
            <person name="Reese M.G."/>
            <person name="Reinert K."/>
            <person name="Remington K."/>
            <person name="Saunders R.D.C."/>
            <person name="Scheeler F."/>
            <person name="Shen H."/>
            <person name="Shue B.C."/>
            <person name="Siden-Kiamos I."/>
            <person name="Simpson M."/>
            <person name="Skupski M.P."/>
            <person name="Smith T.J."/>
            <person name="Spier E."/>
            <person name="Spradling A.C."/>
            <person name="Stapleton M."/>
            <person name="Strong R."/>
            <person name="Sun E."/>
            <person name="Svirskas R."/>
            <person name="Tector C."/>
            <person name="Turner R."/>
            <person name="Venter E."/>
            <person name="Wang A.H."/>
            <person name="Wang X."/>
            <person name="Wang Z.-Y."/>
            <person name="Wassarman D.A."/>
            <person name="Weinstock G.M."/>
            <person name="Weissenbach J."/>
            <person name="Williams S.M."/>
            <person name="Woodage T."/>
            <person name="Worley K.C."/>
            <person name="Wu D."/>
            <person name="Yang S."/>
            <person name="Yao Q.A."/>
            <person name="Ye J."/>
            <person name="Yeh R.-F."/>
            <person name="Zaveri J.S."/>
            <person name="Zhan M."/>
            <person name="Zhang G."/>
            <person name="Zhao Q."/>
            <person name="Zheng L."/>
            <person name="Zheng X.H."/>
            <person name="Zhong F.N."/>
            <person name="Zhong W."/>
            <person name="Zhou X."/>
            <person name="Zhu S.C."/>
            <person name="Zhu X."/>
            <person name="Smith H.O."/>
            <person name="Gibbs R.A."/>
            <person name="Myers E.W."/>
            <person name="Rubin G.M."/>
            <person name="Venter J.C."/>
        </authorList>
    </citation>
    <scope>NUCLEOTIDE SEQUENCE [LARGE SCALE GENOMIC DNA]</scope>
    <source>
        <strain>Berkeley</strain>
    </source>
</reference>
<reference key="2">
    <citation type="journal article" date="2002" name="Genome Biol.">
        <title>Annotation of the Drosophila melanogaster euchromatic genome: a systematic review.</title>
        <authorList>
            <person name="Misra S."/>
            <person name="Crosby M.A."/>
            <person name="Mungall C.J."/>
            <person name="Matthews B.B."/>
            <person name="Campbell K.S."/>
            <person name="Hradecky P."/>
            <person name="Huang Y."/>
            <person name="Kaminker J.S."/>
            <person name="Millburn G.H."/>
            <person name="Prochnik S.E."/>
            <person name="Smith C.D."/>
            <person name="Tupy J.L."/>
            <person name="Whitfield E.J."/>
            <person name="Bayraktaroglu L."/>
            <person name="Berman B.P."/>
            <person name="Bettencourt B.R."/>
            <person name="Celniker S.E."/>
            <person name="de Grey A.D.N.J."/>
            <person name="Drysdale R.A."/>
            <person name="Harris N.L."/>
            <person name="Richter J."/>
            <person name="Russo S."/>
            <person name="Schroeder A.J."/>
            <person name="Shu S.Q."/>
            <person name="Stapleton M."/>
            <person name="Yamada C."/>
            <person name="Ashburner M."/>
            <person name="Gelbart W.M."/>
            <person name="Rubin G.M."/>
            <person name="Lewis S.E."/>
        </authorList>
    </citation>
    <scope>GENOME REANNOTATION</scope>
    <source>
        <strain>Berkeley</strain>
    </source>
</reference>
<reference key="3">
    <citation type="journal article" date="2002" name="Genome Biol.">
        <title>A Drosophila full-length cDNA resource.</title>
        <authorList>
            <person name="Stapleton M."/>
            <person name="Carlson J.W."/>
            <person name="Brokstein P."/>
            <person name="Yu C."/>
            <person name="Champe M."/>
            <person name="George R.A."/>
            <person name="Guarin H."/>
            <person name="Kronmiller B."/>
            <person name="Pacleb J.M."/>
            <person name="Park S."/>
            <person name="Wan K.H."/>
            <person name="Rubin G.M."/>
            <person name="Celniker S.E."/>
        </authorList>
    </citation>
    <scope>NUCLEOTIDE SEQUENCE [LARGE SCALE MRNA]</scope>
    <source>
        <strain>Berkeley</strain>
        <tissue>Embryo</tissue>
        <tissue>Head</tissue>
    </source>
</reference>
<keyword id="KW-0963">Cytoplasm</keyword>
<keyword id="KW-0378">Hydrolase</keyword>
<keyword id="KW-0460">Magnesium</keyword>
<keyword id="KW-0464">Manganese</keyword>
<keyword id="KW-0479">Metal-binding</keyword>
<keyword id="KW-0546">Nucleotide metabolism</keyword>
<keyword id="KW-0547">Nucleotide-binding</keyword>
<keyword id="KW-1185">Reference proteome</keyword>
<organism>
    <name type="scientific">Drosophila melanogaster</name>
    <name type="common">Fruit fly</name>
    <dbReference type="NCBI Taxonomy" id="7227"/>
    <lineage>
        <taxon>Eukaryota</taxon>
        <taxon>Metazoa</taxon>
        <taxon>Ecdysozoa</taxon>
        <taxon>Arthropoda</taxon>
        <taxon>Hexapoda</taxon>
        <taxon>Insecta</taxon>
        <taxon>Pterygota</taxon>
        <taxon>Neoptera</taxon>
        <taxon>Endopterygota</taxon>
        <taxon>Diptera</taxon>
        <taxon>Brachycera</taxon>
        <taxon>Muscomorpha</taxon>
        <taxon>Ephydroidea</taxon>
        <taxon>Drosophilidae</taxon>
        <taxon>Drosophila</taxon>
        <taxon>Sophophora</taxon>
    </lineage>
</organism>
<comment type="function">
    <text evidence="1">Pyrophosphatase that hydrolyzes non-canonical purine nucleotides such as inosine triphosphate (ITP), deoxyinosine triphosphate (dITP) or xanthosine 5'-triphosphate (XTP) to their respective monophosphate derivatives. The enzyme does not distinguish between the deoxy- and ribose forms. Probably excludes non-canonical purines from RNA and DNA precursor pools, thus preventing their incorporation into RNA and DNA and avoiding chromosomal lesions.</text>
</comment>
<comment type="catalytic activity">
    <reaction evidence="1">
        <text>ITP + H2O = IMP + diphosphate + H(+)</text>
        <dbReference type="Rhea" id="RHEA:29399"/>
        <dbReference type="ChEBI" id="CHEBI:15377"/>
        <dbReference type="ChEBI" id="CHEBI:15378"/>
        <dbReference type="ChEBI" id="CHEBI:33019"/>
        <dbReference type="ChEBI" id="CHEBI:58053"/>
        <dbReference type="ChEBI" id="CHEBI:61402"/>
        <dbReference type="EC" id="3.6.1.66"/>
    </reaction>
    <physiologicalReaction direction="left-to-right" evidence="1">
        <dbReference type="Rhea" id="RHEA:29400"/>
    </physiologicalReaction>
</comment>
<comment type="catalytic activity">
    <reaction evidence="1">
        <text>dITP + H2O = dIMP + diphosphate + H(+)</text>
        <dbReference type="Rhea" id="RHEA:28342"/>
        <dbReference type="ChEBI" id="CHEBI:15377"/>
        <dbReference type="ChEBI" id="CHEBI:15378"/>
        <dbReference type="ChEBI" id="CHEBI:33019"/>
        <dbReference type="ChEBI" id="CHEBI:61194"/>
        <dbReference type="ChEBI" id="CHEBI:61382"/>
        <dbReference type="EC" id="3.6.1.66"/>
    </reaction>
    <physiologicalReaction direction="left-to-right" evidence="1">
        <dbReference type="Rhea" id="RHEA:28343"/>
    </physiologicalReaction>
</comment>
<comment type="catalytic activity">
    <reaction evidence="1">
        <text>XTP + H2O = XMP + diphosphate + H(+)</text>
        <dbReference type="Rhea" id="RHEA:28610"/>
        <dbReference type="ChEBI" id="CHEBI:15377"/>
        <dbReference type="ChEBI" id="CHEBI:15378"/>
        <dbReference type="ChEBI" id="CHEBI:33019"/>
        <dbReference type="ChEBI" id="CHEBI:57464"/>
        <dbReference type="ChEBI" id="CHEBI:61314"/>
        <dbReference type="EC" id="3.6.1.66"/>
    </reaction>
    <physiologicalReaction direction="left-to-right" evidence="1">
        <dbReference type="Rhea" id="RHEA:28611"/>
    </physiologicalReaction>
</comment>
<comment type="cofactor">
    <cofactor evidence="1">
        <name>Mg(2+)</name>
        <dbReference type="ChEBI" id="CHEBI:18420"/>
    </cofactor>
    <cofactor evidence="1">
        <name>Mn(2+)</name>
        <dbReference type="ChEBI" id="CHEBI:29035"/>
    </cofactor>
    <text evidence="1">Binds 1 divalent metal cation per subunit; can use either Mg(2+) or Mn(2+).</text>
</comment>
<comment type="subunit">
    <text evidence="1">Homodimer.</text>
</comment>
<comment type="subcellular location">
    <subcellularLocation>
        <location evidence="1">Cytoplasm</location>
    </subcellularLocation>
</comment>
<comment type="similarity">
    <text evidence="1">Belongs to the HAM1 NTPase family.</text>
</comment>
<evidence type="ECO:0000255" key="1">
    <source>
        <dbReference type="HAMAP-Rule" id="MF_03148"/>
    </source>
</evidence>
<dbReference type="EC" id="3.6.1.66" evidence="1"/>
<dbReference type="EMBL" id="AE014134">
    <property type="protein sequence ID" value="AAF52191.1"/>
    <property type="molecule type" value="Genomic_DNA"/>
</dbReference>
<dbReference type="EMBL" id="AY071428">
    <property type="protein sequence ID" value="AAL49050.1"/>
    <property type="molecule type" value="mRNA"/>
</dbReference>
<dbReference type="RefSeq" id="NP_608890.1">
    <property type="nucleotide sequence ID" value="NM_135046.5"/>
</dbReference>
<dbReference type="SMR" id="Q9VMW7"/>
<dbReference type="BioGRID" id="59902">
    <property type="interactions" value="10"/>
</dbReference>
<dbReference type="FunCoup" id="Q9VMW7">
    <property type="interactions" value="1639"/>
</dbReference>
<dbReference type="IntAct" id="Q9VMW7">
    <property type="interactions" value="47"/>
</dbReference>
<dbReference type="STRING" id="7227.FBpp0078684"/>
<dbReference type="PaxDb" id="7227-FBpp0078684"/>
<dbReference type="DNASU" id="33718"/>
<dbReference type="EnsemblMetazoa" id="FBtr0079048">
    <property type="protein sequence ID" value="FBpp0078684"/>
    <property type="gene ID" value="FBgn0031663"/>
</dbReference>
<dbReference type="GeneID" id="33718"/>
<dbReference type="KEGG" id="dme:Dmel_CG8891"/>
<dbReference type="UCSC" id="CG8891-RA">
    <property type="organism name" value="d. melanogaster"/>
</dbReference>
<dbReference type="AGR" id="FB:FBgn0031663"/>
<dbReference type="FlyBase" id="FBgn0031663">
    <property type="gene designation" value="CG8891"/>
</dbReference>
<dbReference type="VEuPathDB" id="VectorBase:FBgn0031663"/>
<dbReference type="eggNOG" id="KOG3222">
    <property type="taxonomic scope" value="Eukaryota"/>
</dbReference>
<dbReference type="GeneTree" id="ENSGT00390000015399"/>
<dbReference type="HOGENOM" id="CLU_082080_1_1_1"/>
<dbReference type="InParanoid" id="Q9VMW7"/>
<dbReference type="OMA" id="YDPIFQP"/>
<dbReference type="OrthoDB" id="6288734at2759"/>
<dbReference type="PhylomeDB" id="Q9VMW7"/>
<dbReference type="Reactome" id="R-DME-74259">
    <property type="pathway name" value="Purine catabolism"/>
</dbReference>
<dbReference type="Reactome" id="R-DME-9755088">
    <property type="pathway name" value="Ribavirin ADME"/>
</dbReference>
<dbReference type="BioGRID-ORCS" id="33718">
    <property type="hits" value="0 hits in 1 CRISPR screen"/>
</dbReference>
<dbReference type="GenomeRNAi" id="33718"/>
<dbReference type="PRO" id="PR:Q9VMW7"/>
<dbReference type="Proteomes" id="UP000000803">
    <property type="component" value="Chromosome 2L"/>
</dbReference>
<dbReference type="Bgee" id="FBgn0031663">
    <property type="expression patterns" value="Expressed in eye disc (Drosophila) and 92 other cell types or tissues"/>
</dbReference>
<dbReference type="GO" id="GO:0005737">
    <property type="term" value="C:cytoplasm"/>
    <property type="evidence" value="ECO:0000318"/>
    <property type="project" value="GO_Central"/>
</dbReference>
<dbReference type="GO" id="GO:0035870">
    <property type="term" value="F:dITP diphosphatase activity"/>
    <property type="evidence" value="ECO:0007669"/>
    <property type="project" value="RHEA"/>
</dbReference>
<dbReference type="GO" id="GO:0036220">
    <property type="term" value="F:ITP diphosphatase activity"/>
    <property type="evidence" value="ECO:0007669"/>
    <property type="project" value="RHEA"/>
</dbReference>
<dbReference type="GO" id="GO:0046872">
    <property type="term" value="F:metal ion binding"/>
    <property type="evidence" value="ECO:0007669"/>
    <property type="project" value="UniProtKB-KW"/>
</dbReference>
<dbReference type="GO" id="GO:0047429">
    <property type="term" value="F:nucleoside triphosphate diphosphatase activity"/>
    <property type="evidence" value="ECO:0000318"/>
    <property type="project" value="GO_Central"/>
</dbReference>
<dbReference type="GO" id="GO:0000166">
    <property type="term" value="F:nucleotide binding"/>
    <property type="evidence" value="ECO:0007669"/>
    <property type="project" value="UniProtKB-KW"/>
</dbReference>
<dbReference type="GO" id="GO:0036222">
    <property type="term" value="F:XTP diphosphatase activity"/>
    <property type="evidence" value="ECO:0007669"/>
    <property type="project" value="RHEA"/>
</dbReference>
<dbReference type="GO" id="GO:0009204">
    <property type="term" value="P:deoxyribonucleoside triphosphate catabolic process"/>
    <property type="evidence" value="ECO:0007669"/>
    <property type="project" value="UniProtKB-UniRule"/>
</dbReference>
<dbReference type="GO" id="GO:0009143">
    <property type="term" value="P:nucleoside triphosphate catabolic process"/>
    <property type="evidence" value="ECO:0000318"/>
    <property type="project" value="GO_Central"/>
</dbReference>
<dbReference type="GO" id="GO:0009117">
    <property type="term" value="P:nucleotide metabolic process"/>
    <property type="evidence" value="ECO:0007669"/>
    <property type="project" value="UniProtKB-KW"/>
</dbReference>
<dbReference type="CDD" id="cd00515">
    <property type="entry name" value="HAM1"/>
    <property type="match status" value="1"/>
</dbReference>
<dbReference type="FunFam" id="3.90.950.10:FF:000003">
    <property type="entry name" value="Inosine triphosphate pyrophosphatase"/>
    <property type="match status" value="1"/>
</dbReference>
<dbReference type="Gene3D" id="3.90.950.10">
    <property type="match status" value="1"/>
</dbReference>
<dbReference type="HAMAP" id="MF_03148">
    <property type="entry name" value="HAM1_NTPase"/>
    <property type="match status" value="1"/>
</dbReference>
<dbReference type="InterPro" id="IPR027502">
    <property type="entry name" value="ITPase"/>
</dbReference>
<dbReference type="InterPro" id="IPR029001">
    <property type="entry name" value="ITPase-like_fam"/>
</dbReference>
<dbReference type="InterPro" id="IPR002637">
    <property type="entry name" value="RdgB/HAM1"/>
</dbReference>
<dbReference type="NCBIfam" id="TIGR00042">
    <property type="entry name" value="RdgB/HAM1 family non-canonical purine NTP pyrophosphatase"/>
    <property type="match status" value="1"/>
</dbReference>
<dbReference type="PANTHER" id="PTHR11067:SF9">
    <property type="entry name" value="INOSINE TRIPHOSPHATE PYROPHOSPHATASE"/>
    <property type="match status" value="1"/>
</dbReference>
<dbReference type="PANTHER" id="PTHR11067">
    <property type="entry name" value="INOSINE TRIPHOSPHATE PYROPHOSPHATASE/HAM1 PROTEIN"/>
    <property type="match status" value="1"/>
</dbReference>
<dbReference type="Pfam" id="PF01725">
    <property type="entry name" value="Ham1p_like"/>
    <property type="match status" value="1"/>
</dbReference>
<dbReference type="SUPFAM" id="SSF52972">
    <property type="entry name" value="ITPase-like"/>
    <property type="match status" value="1"/>
</dbReference>
<proteinExistence type="evidence at transcript level"/>
<protein>
    <recommendedName>
        <fullName evidence="1">Inosine triphosphate pyrophosphatase</fullName>
        <shortName evidence="1">ITPase</shortName>
        <shortName evidence="1">Inosine triphosphatase</shortName>
        <ecNumber evidence="1">3.6.1.66</ecNumber>
    </recommendedName>
    <alternativeName>
        <fullName evidence="1">Non-canonical purine NTP pyrophosphatase</fullName>
    </alternativeName>
    <alternativeName>
        <fullName evidence="1">Non-standard purine NTP pyrophosphatase</fullName>
    </alternativeName>
    <alternativeName>
        <fullName evidence="1">Nucleoside-triphosphate diphosphatase</fullName>
    </alternativeName>
    <alternativeName>
        <fullName evidence="1">Nucleoside-triphosphate pyrophosphatase</fullName>
        <shortName evidence="1">NTPase</shortName>
    </alternativeName>
    <alternativeName>
        <fullName evidence="1">XTP/dITP diphosphatase</fullName>
    </alternativeName>
</protein>
<accession>Q9VMW7</accession>
<name>ITPA_DROME</name>